<reference key="1">
    <citation type="journal article" date="2009" name="BMC Microbiol.">
        <title>The genome sequence of Geobacter metallireducens: features of metabolism, physiology and regulation common and dissimilar to Geobacter sulfurreducens.</title>
        <authorList>
            <person name="Aklujkar M."/>
            <person name="Krushkal J."/>
            <person name="DiBartolo G."/>
            <person name="Lapidus A."/>
            <person name="Land M.L."/>
            <person name="Lovley D.R."/>
        </authorList>
    </citation>
    <scope>NUCLEOTIDE SEQUENCE [LARGE SCALE GENOMIC DNA]</scope>
    <source>
        <strain>ATCC 53774 / DSM 7210 / GS-15</strain>
    </source>
</reference>
<reference key="2">
    <citation type="journal article" date="2014" name="J. Bacteriol.">
        <title>Enzymes involved in a novel anaerobic cyclohexane carboxylic acid degradation pathway.</title>
        <authorList>
            <person name="Kung J.W."/>
            <person name="Meier A.K."/>
            <person name="Mergelsberg M."/>
            <person name="Boll M."/>
        </authorList>
    </citation>
    <scope>FUNCTION</scope>
    <scope>CATALYTIC ACTIVITY</scope>
    <scope>COFACTOR</scope>
    <scope>SUBUNIT</scope>
    <source>
        <strain>ATCC 53774 / DSM 7210 / GS-15</strain>
    </source>
</reference>
<dbReference type="EC" id="1.3.8.11" evidence="1"/>
<dbReference type="EMBL" id="CP000148">
    <property type="protein sequence ID" value="ABB33520.1"/>
    <property type="molecule type" value="Genomic_DNA"/>
</dbReference>
<dbReference type="RefSeq" id="WP_004512531.1">
    <property type="nucleotide sequence ID" value="NC_007517.1"/>
</dbReference>
<dbReference type="SMR" id="Q39QF4"/>
<dbReference type="STRING" id="269799.Gmet_3307"/>
<dbReference type="KEGG" id="gme:Gmet_3307"/>
<dbReference type="eggNOG" id="COG1960">
    <property type="taxonomic scope" value="Bacteria"/>
</dbReference>
<dbReference type="HOGENOM" id="CLU_018204_0_2_7"/>
<dbReference type="BRENDA" id="1.3.8.11">
    <property type="organism ID" value="2414"/>
</dbReference>
<dbReference type="Proteomes" id="UP000007073">
    <property type="component" value="Chromosome"/>
</dbReference>
<dbReference type="GO" id="GO:0003995">
    <property type="term" value="F:acyl-CoA dehydrogenase activity"/>
    <property type="evidence" value="ECO:0007669"/>
    <property type="project" value="InterPro"/>
</dbReference>
<dbReference type="GO" id="GO:0050660">
    <property type="term" value="F:flavin adenine dinucleotide binding"/>
    <property type="evidence" value="ECO:0007669"/>
    <property type="project" value="InterPro"/>
</dbReference>
<dbReference type="FunFam" id="2.40.110.10:FF:000009">
    <property type="entry name" value="Acyl-CoA dehydrogenase"/>
    <property type="match status" value="1"/>
</dbReference>
<dbReference type="FunFam" id="1.20.140.10:FF:000004">
    <property type="entry name" value="Acyl-CoA dehydrogenase FadE25"/>
    <property type="match status" value="1"/>
</dbReference>
<dbReference type="Gene3D" id="1.10.540.10">
    <property type="entry name" value="Acyl-CoA dehydrogenase/oxidase, N-terminal domain"/>
    <property type="match status" value="1"/>
</dbReference>
<dbReference type="Gene3D" id="2.40.110.10">
    <property type="entry name" value="Butyryl-CoA Dehydrogenase, subunit A, domain 2"/>
    <property type="match status" value="1"/>
</dbReference>
<dbReference type="Gene3D" id="1.20.140.10">
    <property type="entry name" value="Butyryl-CoA Dehydrogenase, subunit A, domain 3"/>
    <property type="match status" value="1"/>
</dbReference>
<dbReference type="InterPro" id="IPR006089">
    <property type="entry name" value="Acyl-CoA_DH_CS"/>
</dbReference>
<dbReference type="InterPro" id="IPR006091">
    <property type="entry name" value="Acyl-CoA_Oxase/DH_mid-dom"/>
</dbReference>
<dbReference type="InterPro" id="IPR046373">
    <property type="entry name" value="Acyl-CoA_Oxase/DH_mid-dom_sf"/>
</dbReference>
<dbReference type="InterPro" id="IPR036250">
    <property type="entry name" value="AcylCo_DH-like_C"/>
</dbReference>
<dbReference type="InterPro" id="IPR009075">
    <property type="entry name" value="AcylCo_DH/oxidase_C"/>
</dbReference>
<dbReference type="InterPro" id="IPR013786">
    <property type="entry name" value="AcylCoA_DH/ox_N"/>
</dbReference>
<dbReference type="InterPro" id="IPR037069">
    <property type="entry name" value="AcylCoA_DH/ox_N_sf"/>
</dbReference>
<dbReference type="InterPro" id="IPR009100">
    <property type="entry name" value="AcylCoA_DH/oxidase_NM_dom_sf"/>
</dbReference>
<dbReference type="InterPro" id="IPR054991">
    <property type="entry name" value="CyhCrbnylCoADH"/>
</dbReference>
<dbReference type="NCBIfam" id="NF043006">
    <property type="entry name" value="CyhCrbnylCoADH"/>
    <property type="match status" value="1"/>
</dbReference>
<dbReference type="PANTHER" id="PTHR43884">
    <property type="entry name" value="ACYL-COA DEHYDROGENASE"/>
    <property type="match status" value="1"/>
</dbReference>
<dbReference type="PANTHER" id="PTHR43884:SF12">
    <property type="entry name" value="ISOVALERYL-COA DEHYDROGENASE, MITOCHONDRIAL-RELATED"/>
    <property type="match status" value="1"/>
</dbReference>
<dbReference type="Pfam" id="PF00441">
    <property type="entry name" value="Acyl-CoA_dh_1"/>
    <property type="match status" value="1"/>
</dbReference>
<dbReference type="Pfam" id="PF02770">
    <property type="entry name" value="Acyl-CoA_dh_M"/>
    <property type="match status" value="1"/>
</dbReference>
<dbReference type="Pfam" id="PF02771">
    <property type="entry name" value="Acyl-CoA_dh_N"/>
    <property type="match status" value="1"/>
</dbReference>
<dbReference type="PIRSF" id="PIRSF016578">
    <property type="entry name" value="HsaA"/>
    <property type="match status" value="1"/>
</dbReference>
<dbReference type="SUPFAM" id="SSF47203">
    <property type="entry name" value="Acyl-CoA dehydrogenase C-terminal domain-like"/>
    <property type="match status" value="1"/>
</dbReference>
<dbReference type="SUPFAM" id="SSF56645">
    <property type="entry name" value="Acyl-CoA dehydrogenase NM domain-like"/>
    <property type="match status" value="1"/>
</dbReference>
<dbReference type="PROSITE" id="PS00073">
    <property type="entry name" value="ACYL_COA_DH_2"/>
    <property type="match status" value="1"/>
</dbReference>
<keyword id="KW-0274">FAD</keyword>
<keyword id="KW-0285">Flavoprotein</keyword>
<keyword id="KW-0560">Oxidoreductase</keyword>
<keyword id="KW-1185">Reference proteome</keyword>
<proteinExistence type="evidence at protein level"/>
<protein>
    <recommendedName>
        <fullName evidence="3">Cyclohexane-1-carbonyl-CoA dehydrogenase</fullName>
        <shortName evidence="2">CHCoA dehydrogenase</shortName>
        <ecNumber evidence="1">1.3.8.11</ecNumber>
    </recommendedName>
</protein>
<gene>
    <name evidence="4" type="ordered locus">Gmet_3307</name>
</gene>
<name>CHCOA_GEOMG</name>
<accession>Q39QF4</accession>
<evidence type="ECO:0000269" key="1">
    <source>
    </source>
</evidence>
<evidence type="ECO:0000303" key="2">
    <source>
    </source>
</evidence>
<evidence type="ECO:0000305" key="3"/>
<evidence type="ECO:0000312" key="4">
    <source>
        <dbReference type="EMBL" id="ABB33520.1"/>
    </source>
</evidence>
<sequence length="380" mass="41325">MFNTSEEVRIVTETIRQAARERIAPAAASVDATGELDGEVLSLLWDLGLMTLVFPPEFGGAEQSQGTLLCTAVEEIARHCASSSLMLIIQAVGSFPLLHGGSRELLERVLPRIVERRELAAYLVSEPGAGSDVGSIRTTAVRDGNEYVISGTKCFSTNGPVASYYTVLARTSENGRNGLSFFLVDGDAPGLKVGKIEKKLGQRGSKTSEMYLDEVRVPAGNLLGEENKGFLLAMKDFDMSRPAIGAQALGIAEGAFDQMLKHSRERKTFGQPLCEHQMIQQIIADSATKIEAARGLIYRAAALYDQGKRNTKLASMGKLFASDAAMQITTDAIQVFGGYGYMQDYPVERMFRDAKLTQIFEGANQIQRLVIAREILKEAA</sequence>
<organism>
    <name type="scientific">Geobacter metallireducens (strain ATCC 53774 / DSM 7210 / GS-15)</name>
    <dbReference type="NCBI Taxonomy" id="269799"/>
    <lineage>
        <taxon>Bacteria</taxon>
        <taxon>Pseudomonadati</taxon>
        <taxon>Thermodesulfobacteriota</taxon>
        <taxon>Desulfuromonadia</taxon>
        <taxon>Geobacterales</taxon>
        <taxon>Geobacteraceae</taxon>
        <taxon>Geobacter</taxon>
    </lineage>
</organism>
<feature type="chain" id="PRO_0000460712" description="Cyclohexane-1-carbonyl-CoA dehydrogenase">
    <location>
        <begin position="1"/>
        <end position="380"/>
    </location>
</feature>
<comment type="function">
    <text evidence="1">Acyl-CoA dehydrogenase involved in the anaerobic degradation of cyclohexane carboxylic acid (CHC) (PubMed:25112478). Catalyzes the 1,2-dehydrogenation of cyclohexane-1-carbonyl-CoA (CHCoA) to cyclohex-1-ene-1-carbonyl-CoA (CHeneCoA) (PubMed:25112478). An alternative substrate, cyclohex-3-ene-1-carboxyl-CoA can be converted to the corresponding cyclohexadiene-1-carboxyl-CoA isomers (30% rate compared to CHC) (PubMed:25112478).</text>
</comment>
<comment type="catalytic activity">
    <reaction evidence="1">
        <text>cyclohexane-1-carbonyl-CoA + oxidized [electron-transfer flavoprotein] + H(+) = cyclohex-1-ene-1-carbonyl-CoA + reduced [electron-transfer flavoprotein]</text>
        <dbReference type="Rhea" id="RHEA:38935"/>
        <dbReference type="Rhea" id="RHEA-COMP:10685"/>
        <dbReference type="Rhea" id="RHEA-COMP:10686"/>
        <dbReference type="ChEBI" id="CHEBI:15378"/>
        <dbReference type="ChEBI" id="CHEBI:57692"/>
        <dbReference type="ChEBI" id="CHEBI:58307"/>
        <dbReference type="ChEBI" id="CHEBI:76270"/>
        <dbReference type="ChEBI" id="CHEBI:76271"/>
        <dbReference type="EC" id="1.3.8.11"/>
    </reaction>
    <physiologicalReaction direction="left-to-right" evidence="1">
        <dbReference type="Rhea" id="RHEA:38936"/>
    </physiologicalReaction>
</comment>
<comment type="cofactor">
    <cofactor evidence="1">
        <name>FAD</name>
        <dbReference type="ChEBI" id="CHEBI:57692"/>
    </cofactor>
</comment>
<comment type="subunit">
    <text evidence="1">Homotetramer.</text>
</comment>
<comment type="similarity">
    <text evidence="3">Belongs to the acyl-CoA dehydrogenase family.</text>
</comment>